<accession>Q37679</accession>
<accession>Q4UJ68</accession>
<sequence>MRNSVQSDLKYINIINISETLYLFYSTGLDTLEYIDSTYKNFIIMYVNQHLLYGTTLKYLSVGEFFINSLTIFINGIRETMTSSTVIMYAIFGMFIFSEIMVFSTFIWGFFHFRLSNPVMIIEVNLEAFLQISDVLNAGSILISLILQRIEERGYFEVDYMLERLILIGFIFLSFQGDEYSLVKSYINNHWVTLYFNVLTGLHSLHVYVGGIFALMQAFASENCGCQKDEDFNAGMYWHFVEIIWIALTMLLFLL</sequence>
<keyword id="KW-0472">Membrane</keyword>
<keyword id="KW-0496">Mitochondrion</keyword>
<keyword id="KW-0999">Mitochondrion inner membrane</keyword>
<keyword id="KW-1185">Reference proteome</keyword>
<keyword id="KW-1278">Translocase</keyword>
<keyword id="KW-0812">Transmembrane</keyword>
<keyword id="KW-1133">Transmembrane helix</keyword>
<protein>
    <recommendedName>
        <fullName>Cytochrome c oxidase subunit 3</fullName>
        <ecNumber>7.1.1.9</ecNumber>
    </recommendedName>
    <alternativeName>
        <fullName>Cytochrome c oxidase polypeptide III</fullName>
    </alternativeName>
</protein>
<feature type="chain" id="PRO_0000183862" description="Cytochrome c oxidase subunit 3">
    <location>
        <begin position="1"/>
        <end position="255"/>
    </location>
</feature>
<feature type="transmembrane region" description="Helical" evidence="2">
    <location>
        <begin position="12"/>
        <end position="29"/>
    </location>
</feature>
<feature type="transmembrane region" description="Helical" evidence="2">
    <location>
        <begin position="57"/>
        <end position="77"/>
    </location>
</feature>
<feature type="transmembrane region" description="Helical" evidence="2">
    <location>
        <begin position="91"/>
        <end position="111"/>
    </location>
</feature>
<feature type="transmembrane region" description="Helical" evidence="2">
    <location>
        <begin position="126"/>
        <end position="146"/>
    </location>
</feature>
<feature type="transmembrane region" description="Helical" evidence="2">
    <location>
        <begin position="155"/>
        <end position="175"/>
    </location>
</feature>
<feature type="transmembrane region" description="Helical" evidence="2">
    <location>
        <begin position="196"/>
        <end position="216"/>
    </location>
</feature>
<feature type="transmembrane region" description="Helical" evidence="2">
    <location>
        <begin position="235"/>
        <end position="255"/>
    </location>
</feature>
<organism>
    <name type="scientific">Theileria annulata</name>
    <dbReference type="NCBI Taxonomy" id="5874"/>
    <lineage>
        <taxon>Eukaryota</taxon>
        <taxon>Sar</taxon>
        <taxon>Alveolata</taxon>
        <taxon>Apicomplexa</taxon>
        <taxon>Aconoidasida</taxon>
        <taxon>Piroplasmida</taxon>
        <taxon>Theileriidae</taxon>
        <taxon>Theileria</taxon>
    </lineage>
</organism>
<comment type="function">
    <text evidence="1">Component of the cytochrome c oxidase, the last enzyme in the mitochondrial electron transport chain which drives oxidative phosphorylation. The respiratory chain contains 3 multisubunit complexes succinate dehydrogenase (complex II, CII), ubiquinol-cytochrome c oxidoreductase (cytochrome b-c1 complex, complex III, CIII) and cytochrome c oxidase (complex IV, CIV), that cooperate to transfer electrons derived from NADH and succinate to molecular oxygen, creating an electrochemical gradient over the inner membrane that drives transmembrane transport and the ATP synthase. Cytochrome c oxidase is the component of the respiratory chain that catalyzes the reduction of oxygen to water. Electrons originating from reduced cytochrome c in the intermembrane space (IMS) are transferred via the dinuclear copper A center (CU(A)) of subunit 2 and heme A of subunit 1 to the active site in subunit 1, a binuclear center (BNC) formed by heme A3 and copper B (CU(B)). The BNC reduces molecular oxygen to 2 water molecules using 4 electrons from cytochrome c in the IMS and 4 protons from the mitochondrial matrix.</text>
</comment>
<comment type="catalytic activity">
    <reaction evidence="1">
        <text>4 Fe(II)-[cytochrome c] + O2 + 8 H(+)(in) = 4 Fe(III)-[cytochrome c] + 2 H2O + 4 H(+)(out)</text>
        <dbReference type="Rhea" id="RHEA:11436"/>
        <dbReference type="Rhea" id="RHEA-COMP:10350"/>
        <dbReference type="Rhea" id="RHEA-COMP:14399"/>
        <dbReference type="ChEBI" id="CHEBI:15377"/>
        <dbReference type="ChEBI" id="CHEBI:15378"/>
        <dbReference type="ChEBI" id="CHEBI:15379"/>
        <dbReference type="ChEBI" id="CHEBI:29033"/>
        <dbReference type="ChEBI" id="CHEBI:29034"/>
        <dbReference type="EC" id="7.1.1.9"/>
    </reaction>
    <physiologicalReaction direction="left-to-right" evidence="1">
        <dbReference type="Rhea" id="RHEA:11437"/>
    </physiologicalReaction>
</comment>
<comment type="subunit">
    <text evidence="1">Component of the cytochrome c oxidase (complex IV, CIV), a multisubunit enzyme composed of a catalytic core of 3 subunits and several supernumerary subunits. The complex exists as a monomer or a dimer and forms supercomplexes (SCs) in the inner mitochondrial membrane with ubiquinol-cytochrome c oxidoreductase (cytochrome b-c1 complex, complex III, CIII).</text>
</comment>
<comment type="subcellular location">
    <subcellularLocation>
        <location evidence="1">Mitochondrion inner membrane</location>
        <topology evidence="1">Multi-pass membrane protein</topology>
    </subcellularLocation>
</comment>
<comment type="similarity">
    <text evidence="3">Belongs to the cytochrome c oxidase subunit 3 family.</text>
</comment>
<reference key="1">
    <citation type="submission" date="1995-07" db="EMBL/GenBank/DDBJ databases">
        <title>Synonymous codon usage (SCU) bias differentiates Theilerial nuclear genes from mitochondrial ones.</title>
        <authorList>
            <person name="Lawson D."/>
            <person name="Hall R."/>
        </authorList>
    </citation>
    <scope>NUCLEOTIDE SEQUENCE [GENOMIC DNA]</scope>
    <source>
        <strain>Hissar</strain>
    </source>
</reference>
<reference key="2">
    <citation type="journal article" date="2005" name="Science">
        <title>Genome of the host-cell transforming parasite Theileria annulata compared with T. parva.</title>
        <authorList>
            <person name="Pain A."/>
            <person name="Renauld H."/>
            <person name="Berriman M."/>
            <person name="Murphy L."/>
            <person name="Yeats C.A."/>
            <person name="Weir W."/>
            <person name="Kerhornou A."/>
            <person name="Aslett M."/>
            <person name="Bishop R."/>
            <person name="Bouchier C."/>
            <person name="Cochet M."/>
            <person name="Coulson R.M.R."/>
            <person name="Cronin A."/>
            <person name="de Villiers E.P."/>
            <person name="Fraser A."/>
            <person name="Fosker N."/>
            <person name="Gardner M."/>
            <person name="Goble A."/>
            <person name="Griffiths-Jones S."/>
            <person name="Harris D.E."/>
            <person name="Katzer F."/>
            <person name="Larke N."/>
            <person name="Lord A."/>
            <person name="Maser P."/>
            <person name="McKellar S."/>
            <person name="Mooney P."/>
            <person name="Morton F."/>
            <person name="Nene V."/>
            <person name="O'Neil S."/>
            <person name="Price C."/>
            <person name="Quail M.A."/>
            <person name="Rabbinowitsch E."/>
            <person name="Rawlings N.D."/>
            <person name="Rutter S."/>
            <person name="Saunders D."/>
            <person name="Seeger K."/>
            <person name="Shah T."/>
            <person name="Squares R."/>
            <person name="Squares S."/>
            <person name="Tivey A."/>
            <person name="Walker A.R."/>
            <person name="Woodward J."/>
            <person name="Dobbelaere D.A.E."/>
            <person name="Langsley G."/>
            <person name="Rajandream M.A."/>
            <person name="McKeever D."/>
            <person name="Shiels B."/>
            <person name="Tait A."/>
            <person name="Barrell B.G."/>
            <person name="Hall N."/>
        </authorList>
    </citation>
    <scope>NUCLEOTIDE SEQUENCE [LARGE SCALE GENOMIC DNA]</scope>
    <source>
        <strain>Ankara</strain>
    </source>
</reference>
<evidence type="ECO:0000250" key="1">
    <source>
        <dbReference type="UniProtKB" id="P00420"/>
    </source>
</evidence>
<evidence type="ECO:0000255" key="2"/>
<evidence type="ECO:0000305" key="3"/>
<dbReference type="EC" id="7.1.1.9"/>
<dbReference type="EMBL" id="U32225">
    <property type="protein sequence ID" value="AAA73631.1"/>
    <property type="molecule type" value="Genomic_DNA"/>
</dbReference>
<dbReference type="EMBL" id="CR940346">
    <property type="protein sequence ID" value="CAI72675.1"/>
    <property type="molecule type" value="Genomic_DNA"/>
</dbReference>
<dbReference type="SMR" id="Q37679"/>
<dbReference type="FunCoup" id="Q37679">
    <property type="interactions" value="33"/>
</dbReference>
<dbReference type="STRING" id="5874.Q37679"/>
<dbReference type="VEuPathDB" id="PiroplasmaDB:Tap370b08.q2ca38.02c"/>
<dbReference type="InParanoid" id="Q37679"/>
<dbReference type="OMA" id="ASENCGC"/>
<dbReference type="OrthoDB" id="369754at2759"/>
<dbReference type="Proteomes" id="UP000001950">
    <property type="component" value="Mitochondrion"/>
</dbReference>
<dbReference type="GO" id="GO:0005743">
    <property type="term" value="C:mitochondrial inner membrane"/>
    <property type="evidence" value="ECO:0007669"/>
    <property type="project" value="UniProtKB-SubCell"/>
</dbReference>
<dbReference type="GO" id="GO:0004129">
    <property type="term" value="F:cytochrome-c oxidase activity"/>
    <property type="evidence" value="ECO:0007669"/>
    <property type="project" value="UniProtKB-EC"/>
</dbReference>
<dbReference type="GO" id="GO:0006123">
    <property type="term" value="P:mitochondrial electron transport, cytochrome c to oxygen"/>
    <property type="evidence" value="ECO:0007669"/>
    <property type="project" value="TreeGrafter"/>
</dbReference>
<dbReference type="CDD" id="cd00386">
    <property type="entry name" value="Heme_Cu_Oxidase_III_like"/>
    <property type="match status" value="1"/>
</dbReference>
<dbReference type="Gene3D" id="1.20.120.80">
    <property type="entry name" value="Cytochrome c oxidase, subunit III, four-helix bundle"/>
    <property type="match status" value="1"/>
</dbReference>
<dbReference type="InterPro" id="IPR024791">
    <property type="entry name" value="Cyt_c/ubiquinol_Oxase_su3"/>
</dbReference>
<dbReference type="InterPro" id="IPR000298">
    <property type="entry name" value="Cyt_c_oxidase-like_su3"/>
</dbReference>
<dbReference type="InterPro" id="IPR035973">
    <property type="entry name" value="Cyt_c_oxidase_su3-like_sf"/>
</dbReference>
<dbReference type="InterPro" id="IPR013833">
    <property type="entry name" value="Cyt_c_oxidase_su3_a-hlx"/>
</dbReference>
<dbReference type="PANTHER" id="PTHR11403:SF7">
    <property type="entry name" value="CYTOCHROME C OXIDASE SUBUNIT 3"/>
    <property type="match status" value="1"/>
</dbReference>
<dbReference type="PANTHER" id="PTHR11403">
    <property type="entry name" value="CYTOCHROME C OXIDASE SUBUNIT III"/>
    <property type="match status" value="1"/>
</dbReference>
<dbReference type="Pfam" id="PF00510">
    <property type="entry name" value="COX3"/>
    <property type="match status" value="1"/>
</dbReference>
<dbReference type="SUPFAM" id="SSF81452">
    <property type="entry name" value="Cytochrome c oxidase subunit III-like"/>
    <property type="match status" value="1"/>
</dbReference>
<dbReference type="PROSITE" id="PS50253">
    <property type="entry name" value="COX3"/>
    <property type="match status" value="1"/>
</dbReference>
<gene>
    <name type="primary">MT-CO3</name>
    <name type="synonym">COIII</name>
    <name type="synonym">COXIII</name>
    <name type="synonym">MTCO3</name>
    <name type="ORF">Tap370b08.q2ca38.02c</name>
</gene>
<proteinExistence type="inferred from homology"/>
<name>COX3_THEAN</name>
<geneLocation type="mitochondrion"/>